<organismHost>
    <name type="scientific">Ornithodoros</name>
    <name type="common">relapsing fever ticks</name>
    <dbReference type="NCBI Taxonomy" id="6937"/>
</organismHost>
<organismHost>
    <name type="scientific">Sus scrofa</name>
    <name type="common">Pig</name>
    <dbReference type="NCBI Taxonomy" id="9823"/>
</organismHost>
<reference key="1">
    <citation type="journal article" date="1995" name="Virology">
        <title>Analysis of the complete nucleotide sequence of African swine fever virus.</title>
        <authorList>
            <person name="Yanez R.J."/>
            <person name="Rodriguez J.M."/>
            <person name="Nogal M.L."/>
            <person name="Yuste L."/>
            <person name="Enriquez C."/>
            <person name="Rodriguez J.F."/>
            <person name="Vinuela E."/>
        </authorList>
    </citation>
    <scope>NUCLEOTIDE SEQUENCE [LARGE SCALE GENOMIC DNA]</scope>
</reference>
<reference key="2">
    <citation type="journal article" date="2018" name="J. Virol.">
        <title>A Proteomic Atlas of the African Swine Fever Virus Particle.</title>
        <authorList>
            <person name="Alejo A."/>
            <person name="Matamoros T."/>
            <person name="Guerra M."/>
            <person name="Andres G."/>
        </authorList>
    </citation>
    <scope>SUBCELLULAR LOCATION</scope>
</reference>
<reference key="3">
    <citation type="journal article" date="2020" name="J. Virol.">
        <title>The African Swine Fever Virus Transcriptome.</title>
        <authorList>
            <person name="Cackett G."/>
            <person name="Matelska D."/>
            <person name="Sykora M."/>
            <person name="Portugal R."/>
            <person name="Malecki M."/>
            <person name="Baehler J."/>
            <person name="Dixon L."/>
            <person name="Werner F."/>
        </authorList>
    </citation>
    <scope>INDUCTION</scope>
</reference>
<proteinExistence type="evidence at transcript level"/>
<feature type="chain" id="PRO_0000373495" description="Uncharacterized protein H124R">
    <location>
        <begin position="1"/>
        <end position="124"/>
    </location>
</feature>
<comment type="subcellular location">
    <subcellularLocation>
        <location evidence="1">Virion</location>
    </subcellularLocation>
</comment>
<comment type="induction">
    <text evidence="2">Expressed in the late phase of the viral replicative cycle.</text>
</comment>
<comment type="similarity">
    <text evidence="3">Belongs to the asfivirus H124R family.</text>
</comment>
<sequence>MNLEYVQVVQKFNQVLLELTKKVCTVVGGSKPTYWYHHIRRVCSECPSMPMSMIGPYLNVYKAQILTRDKNFFMNFDPAHNEYTFIIQKLKEAARNMPEDELEQYWVKLLFLLKSYIKCKPFIN</sequence>
<keyword id="KW-0426">Late protein</keyword>
<keyword id="KW-1185">Reference proteome</keyword>
<keyword id="KW-0946">Virion</keyword>
<dbReference type="EMBL" id="U18466">
    <property type="protein sequence ID" value="AAA65344.1"/>
    <property type="molecule type" value="Genomic_DNA"/>
</dbReference>
<dbReference type="RefSeq" id="NP_042808.1">
    <property type="nucleotide sequence ID" value="NC_001659.2"/>
</dbReference>
<dbReference type="GeneID" id="22220345"/>
<dbReference type="KEGG" id="vg:22220345"/>
<dbReference type="Proteomes" id="UP000000624">
    <property type="component" value="Segment"/>
</dbReference>
<dbReference type="GO" id="GO:0044423">
    <property type="term" value="C:virion component"/>
    <property type="evidence" value="ECO:0007669"/>
    <property type="project" value="UniProtKB-KW"/>
</dbReference>
<name>VF124_ASFB7</name>
<protein>
    <recommendedName>
        <fullName>Uncharacterized protein H124R</fullName>
        <shortName>pH124R</shortName>
    </recommendedName>
</protein>
<evidence type="ECO:0000269" key="1">
    <source>
    </source>
</evidence>
<evidence type="ECO:0000269" key="2">
    <source>
    </source>
</evidence>
<evidence type="ECO:0000305" key="3"/>
<organism>
    <name type="scientific">African swine fever virus (strain Badajoz 1971 Vero-adapted)</name>
    <name type="common">Ba71V</name>
    <name type="synonym">ASFV</name>
    <dbReference type="NCBI Taxonomy" id="10498"/>
    <lineage>
        <taxon>Viruses</taxon>
        <taxon>Varidnaviria</taxon>
        <taxon>Bamfordvirae</taxon>
        <taxon>Nucleocytoviricota</taxon>
        <taxon>Pokkesviricetes</taxon>
        <taxon>Asfuvirales</taxon>
        <taxon>Asfarviridae</taxon>
        <taxon>Asfivirus</taxon>
        <taxon>African swine fever virus</taxon>
    </lineage>
</organism>
<gene>
    <name type="ordered locus">Ba71V-115</name>
    <name type="ORF">H124R</name>
</gene>
<accession>Q65186</accession>